<keyword id="KW-1015">Disulfide bond</keyword>
<keyword id="KW-0325">Glycoprotein</keyword>
<keyword id="KW-1199">Hemostasis impairing toxin</keyword>
<keyword id="KW-0378">Hydrolase</keyword>
<keyword id="KW-0645">Protease</keyword>
<keyword id="KW-0964">Secreted</keyword>
<keyword id="KW-0720">Serine protease</keyword>
<keyword id="KW-0800">Toxin</keyword>
<sequence length="236" mass="26201">VIGGVECNINEHRFLVALYTSRSRRFYCGGTLINQEWVLTAAHCDRKNIRIKLGMHSEKVPNEDAQTRVPKEKFFCLSSKTYTKWDKDIMLMRLKRPVNNSTHIAPVSLPSNPPSVGSVCRVMGWGTITSSQETHPDVPHCANINILDYEVCRAAYPELPVTRRTLCAGILEGGKDSCNGDSGGPLICNGQFQGIAYWGADTCAQPREPGLYTKVFDYTDWIQSIISGNTDATCPQ</sequence>
<protein>
    <recommendedName>
        <fullName>Snake venom serine protease ussurin</fullName>
        <shortName>SVSP</shortName>
        <ecNumber>3.4.21.-</ecNumber>
    </recommendedName>
</protein>
<organism>
    <name type="scientific">Gloydius ussuriensis</name>
    <name type="common">Ussuri mamushi</name>
    <name type="synonym">Gloydius blomhoffii ussuriensis</name>
    <dbReference type="NCBI Taxonomy" id="35671"/>
    <lineage>
        <taxon>Eukaryota</taxon>
        <taxon>Metazoa</taxon>
        <taxon>Chordata</taxon>
        <taxon>Craniata</taxon>
        <taxon>Vertebrata</taxon>
        <taxon>Euteleostomi</taxon>
        <taxon>Lepidosauria</taxon>
        <taxon>Squamata</taxon>
        <taxon>Bifurcata</taxon>
        <taxon>Unidentata</taxon>
        <taxon>Episquamata</taxon>
        <taxon>Toxicofera</taxon>
        <taxon>Serpentes</taxon>
        <taxon>Colubroidea</taxon>
        <taxon>Viperidae</taxon>
        <taxon>Crotalinae</taxon>
        <taxon>Gloydius</taxon>
    </lineage>
</organism>
<name>VSPUI_GLOUS</name>
<accession>Q8UUJ2</accession>
<dbReference type="EC" id="3.4.21.-"/>
<dbReference type="EMBL" id="AF444250">
    <property type="protein sequence ID" value="AAL48221.1"/>
    <property type="status" value="ALT_INIT"/>
    <property type="molecule type" value="mRNA"/>
</dbReference>
<dbReference type="SMR" id="Q8UUJ2"/>
<dbReference type="MEROPS" id="S01.509"/>
<dbReference type="GO" id="GO:0005576">
    <property type="term" value="C:extracellular region"/>
    <property type="evidence" value="ECO:0007669"/>
    <property type="project" value="UniProtKB-SubCell"/>
</dbReference>
<dbReference type="GO" id="GO:0030141">
    <property type="term" value="C:secretory granule"/>
    <property type="evidence" value="ECO:0007669"/>
    <property type="project" value="TreeGrafter"/>
</dbReference>
<dbReference type="GO" id="GO:0004252">
    <property type="term" value="F:serine-type endopeptidase activity"/>
    <property type="evidence" value="ECO:0007669"/>
    <property type="project" value="InterPro"/>
</dbReference>
<dbReference type="GO" id="GO:0090729">
    <property type="term" value="F:toxin activity"/>
    <property type="evidence" value="ECO:0007669"/>
    <property type="project" value="UniProtKB-KW"/>
</dbReference>
<dbReference type="GO" id="GO:0006508">
    <property type="term" value="P:proteolysis"/>
    <property type="evidence" value="ECO:0007669"/>
    <property type="project" value="UniProtKB-KW"/>
</dbReference>
<dbReference type="CDD" id="cd00190">
    <property type="entry name" value="Tryp_SPc"/>
    <property type="match status" value="1"/>
</dbReference>
<dbReference type="FunFam" id="2.40.10.10:FF:000158">
    <property type="entry name" value="Thrombin-like enzyme saxthrombin"/>
    <property type="match status" value="1"/>
</dbReference>
<dbReference type="FunFam" id="2.40.10.10:FF:000153">
    <property type="entry name" value="Venom plasminogen activator TSV-PA"/>
    <property type="match status" value="1"/>
</dbReference>
<dbReference type="Gene3D" id="2.40.10.10">
    <property type="entry name" value="Trypsin-like serine proteases"/>
    <property type="match status" value="2"/>
</dbReference>
<dbReference type="InterPro" id="IPR009003">
    <property type="entry name" value="Peptidase_S1_PA"/>
</dbReference>
<dbReference type="InterPro" id="IPR043504">
    <property type="entry name" value="Peptidase_S1_PA_chymotrypsin"/>
</dbReference>
<dbReference type="InterPro" id="IPR001314">
    <property type="entry name" value="Peptidase_S1A"/>
</dbReference>
<dbReference type="InterPro" id="IPR001254">
    <property type="entry name" value="Trypsin_dom"/>
</dbReference>
<dbReference type="InterPro" id="IPR018114">
    <property type="entry name" value="TRYPSIN_HIS"/>
</dbReference>
<dbReference type="InterPro" id="IPR033116">
    <property type="entry name" value="TRYPSIN_SER"/>
</dbReference>
<dbReference type="PANTHER" id="PTHR24271:SF47">
    <property type="entry name" value="KALLIKREIN-1"/>
    <property type="match status" value="1"/>
</dbReference>
<dbReference type="PANTHER" id="PTHR24271">
    <property type="entry name" value="KALLIKREIN-RELATED"/>
    <property type="match status" value="1"/>
</dbReference>
<dbReference type="Pfam" id="PF00089">
    <property type="entry name" value="Trypsin"/>
    <property type="match status" value="1"/>
</dbReference>
<dbReference type="PRINTS" id="PR00722">
    <property type="entry name" value="CHYMOTRYPSIN"/>
</dbReference>
<dbReference type="SMART" id="SM00020">
    <property type="entry name" value="Tryp_SPc"/>
    <property type="match status" value="1"/>
</dbReference>
<dbReference type="SUPFAM" id="SSF50494">
    <property type="entry name" value="Trypsin-like serine proteases"/>
    <property type="match status" value="1"/>
</dbReference>
<dbReference type="PROSITE" id="PS50240">
    <property type="entry name" value="TRYPSIN_DOM"/>
    <property type="match status" value="1"/>
</dbReference>
<dbReference type="PROSITE" id="PS00134">
    <property type="entry name" value="TRYPSIN_HIS"/>
    <property type="match status" value="1"/>
</dbReference>
<dbReference type="PROSITE" id="PS00135">
    <property type="entry name" value="TRYPSIN_SER"/>
    <property type="match status" value="1"/>
</dbReference>
<evidence type="ECO:0000250" key="1"/>
<evidence type="ECO:0000255" key="2"/>
<evidence type="ECO:0000255" key="3">
    <source>
        <dbReference type="PROSITE-ProRule" id="PRU00274"/>
    </source>
</evidence>
<evidence type="ECO:0000305" key="4"/>
<reference key="1">
    <citation type="journal article" date="2001" name="She Zhi">
        <title>Cloning and analysis of cDNA for thrombin-like enzyme, ussurin and ussurase, from Agkistrodon halys ussuriensis snake venom.</title>
        <authorList>
            <person name="Daolin D."/>
            <person name="Xiaodong D."/>
            <person name="Wenfang W."/>
            <person name="Anguo L."/>
            <person name="Mei X."/>
        </authorList>
    </citation>
    <scope>NUCLEOTIDE SEQUENCE [MRNA]</scope>
    <source>
        <tissue>Venom gland</tissue>
    </source>
</reference>
<proteinExistence type="evidence at transcript level"/>
<comment type="function">
    <text evidence="1">Snake venom serine protease that may act in the hemostasis system of the prey.</text>
</comment>
<comment type="subunit">
    <text evidence="1">Monomer.</text>
</comment>
<comment type="subcellular location">
    <subcellularLocation>
        <location evidence="1">Secreted</location>
    </subcellularLocation>
</comment>
<comment type="tissue specificity">
    <text>Expressed by the venom gland.</text>
</comment>
<comment type="similarity">
    <text evidence="3">Belongs to the peptidase S1 family. Snake venom subfamily.</text>
</comment>
<comment type="sequence caution" evidence="4">
    <conflict type="erroneous initiation">
        <sequence resource="EMBL-CDS" id="AAL48221"/>
    </conflict>
</comment>
<feature type="chain" id="PRO_0000295824" description="Snake venom serine protease ussurin">
    <location>
        <begin position="1"/>
        <end position="236"/>
    </location>
</feature>
<feature type="domain" description="Peptidase S1" evidence="3">
    <location>
        <begin position="1"/>
        <end position="227"/>
    </location>
</feature>
<feature type="active site" description="Charge relay system" evidence="1">
    <location>
        <position position="43"/>
    </location>
</feature>
<feature type="active site" description="Charge relay system" evidence="1">
    <location>
        <position position="88"/>
    </location>
</feature>
<feature type="active site" description="Charge relay system" evidence="1">
    <location>
        <position position="182"/>
    </location>
</feature>
<feature type="glycosylation site" description="N-linked (GlcNAc...) asparagine" evidence="2">
    <location>
        <position position="99"/>
    </location>
</feature>
<feature type="glycosylation site" description="N-linked (GlcNAc...) asparagine" evidence="2">
    <location>
        <position position="100"/>
    </location>
</feature>
<feature type="disulfide bond" evidence="3">
    <location>
        <begin position="28"/>
        <end position="44"/>
    </location>
</feature>
<feature type="disulfide bond" evidence="3">
    <location>
        <begin position="120"/>
        <end position="188"/>
    </location>
</feature>
<feature type="disulfide bond" evidence="3">
    <location>
        <begin position="152"/>
        <end position="167"/>
    </location>
</feature>
<feature type="disulfide bond" evidence="3">
    <location>
        <begin position="178"/>
        <end position="203"/>
    </location>
</feature>